<feature type="chain" id="PRO_0000257499" description="Putative pre-16S rRNA nuclease">
    <location>
        <begin position="1"/>
        <end position="133"/>
    </location>
</feature>
<sequence>MILAFDYGTQKIGVASGNELLGTATPLKALPCKNTQPNWDDIAALLKEWEPEALVVGLPLNMDGSDSESTVRARKFANRLHGRFGKKVWLIDERLSTREARERTGIKKADSRVDSMAAVIIAEGFFAGDAKVF</sequence>
<accession>Q0VTI2</accession>
<gene>
    <name type="ordered locus">ABO_0113</name>
</gene>
<reference key="1">
    <citation type="journal article" date="2006" name="Nat. Biotechnol.">
        <title>Genome sequence of the ubiquitous hydrocarbon-degrading marine bacterium Alcanivorax borkumensis.</title>
        <authorList>
            <person name="Schneiker S."/>
            <person name="Martins dos Santos V.A.P."/>
            <person name="Bartels D."/>
            <person name="Bekel T."/>
            <person name="Brecht M."/>
            <person name="Buhrmester J."/>
            <person name="Chernikova T.N."/>
            <person name="Denaro R."/>
            <person name="Ferrer M."/>
            <person name="Gertler C."/>
            <person name="Goesmann A."/>
            <person name="Golyshina O.V."/>
            <person name="Kaminski F."/>
            <person name="Khachane A.N."/>
            <person name="Lang S."/>
            <person name="Linke B."/>
            <person name="McHardy A.C."/>
            <person name="Meyer F."/>
            <person name="Nechitaylo T."/>
            <person name="Puehler A."/>
            <person name="Regenhardt D."/>
            <person name="Rupp O."/>
            <person name="Sabirova J.S."/>
            <person name="Selbitschka W."/>
            <person name="Yakimov M.M."/>
            <person name="Timmis K.N."/>
            <person name="Vorhoelter F.-J."/>
            <person name="Weidner S."/>
            <person name="Kaiser O."/>
            <person name="Golyshin P.N."/>
        </authorList>
    </citation>
    <scope>NUCLEOTIDE SEQUENCE [LARGE SCALE GENOMIC DNA]</scope>
    <source>
        <strain>ATCC 700651 / DSM 11573 / NCIMB 13689 / SK2</strain>
    </source>
</reference>
<organism>
    <name type="scientific">Alcanivorax borkumensis (strain ATCC 700651 / DSM 11573 / NCIMB 13689 / SK2)</name>
    <dbReference type="NCBI Taxonomy" id="393595"/>
    <lineage>
        <taxon>Bacteria</taxon>
        <taxon>Pseudomonadati</taxon>
        <taxon>Pseudomonadota</taxon>
        <taxon>Gammaproteobacteria</taxon>
        <taxon>Oceanospirillales</taxon>
        <taxon>Alcanivoracaceae</taxon>
        <taxon>Alcanivorax</taxon>
    </lineage>
</organism>
<evidence type="ECO:0000255" key="1">
    <source>
        <dbReference type="HAMAP-Rule" id="MF_00651"/>
    </source>
</evidence>
<comment type="function">
    <text evidence="1">Could be a nuclease involved in processing of the 5'-end of pre-16S rRNA.</text>
</comment>
<comment type="subcellular location">
    <subcellularLocation>
        <location evidence="1">Cytoplasm</location>
    </subcellularLocation>
</comment>
<comment type="similarity">
    <text evidence="1">Belongs to the YqgF nuclease family.</text>
</comment>
<keyword id="KW-0963">Cytoplasm</keyword>
<keyword id="KW-0378">Hydrolase</keyword>
<keyword id="KW-0540">Nuclease</keyword>
<keyword id="KW-1185">Reference proteome</keyword>
<keyword id="KW-0690">Ribosome biogenesis</keyword>
<name>YQGF_ALCBS</name>
<protein>
    <recommendedName>
        <fullName evidence="1">Putative pre-16S rRNA nuclease</fullName>
        <ecNumber evidence="1">3.1.-.-</ecNumber>
    </recommendedName>
</protein>
<dbReference type="EC" id="3.1.-.-" evidence="1"/>
<dbReference type="EMBL" id="AM286690">
    <property type="protein sequence ID" value="CAL15561.1"/>
    <property type="molecule type" value="Genomic_DNA"/>
</dbReference>
<dbReference type="SMR" id="Q0VTI2"/>
<dbReference type="STRING" id="393595.ABO_0113"/>
<dbReference type="KEGG" id="abo:ABO_0113"/>
<dbReference type="eggNOG" id="COG0816">
    <property type="taxonomic scope" value="Bacteria"/>
</dbReference>
<dbReference type="HOGENOM" id="CLU_098240_3_0_6"/>
<dbReference type="OrthoDB" id="9796140at2"/>
<dbReference type="Proteomes" id="UP000008871">
    <property type="component" value="Chromosome"/>
</dbReference>
<dbReference type="GO" id="GO:0005829">
    <property type="term" value="C:cytosol"/>
    <property type="evidence" value="ECO:0007669"/>
    <property type="project" value="TreeGrafter"/>
</dbReference>
<dbReference type="GO" id="GO:0004518">
    <property type="term" value="F:nuclease activity"/>
    <property type="evidence" value="ECO:0007669"/>
    <property type="project" value="UniProtKB-KW"/>
</dbReference>
<dbReference type="GO" id="GO:0000967">
    <property type="term" value="P:rRNA 5'-end processing"/>
    <property type="evidence" value="ECO:0007669"/>
    <property type="project" value="UniProtKB-UniRule"/>
</dbReference>
<dbReference type="CDD" id="cd16964">
    <property type="entry name" value="YqgF"/>
    <property type="match status" value="1"/>
</dbReference>
<dbReference type="Gene3D" id="3.30.420.140">
    <property type="entry name" value="YqgF/RNase H-like domain"/>
    <property type="match status" value="1"/>
</dbReference>
<dbReference type="HAMAP" id="MF_00651">
    <property type="entry name" value="Nuclease_YqgF"/>
    <property type="match status" value="1"/>
</dbReference>
<dbReference type="InterPro" id="IPR012337">
    <property type="entry name" value="RNaseH-like_sf"/>
</dbReference>
<dbReference type="InterPro" id="IPR005227">
    <property type="entry name" value="YqgF"/>
</dbReference>
<dbReference type="InterPro" id="IPR006641">
    <property type="entry name" value="YqgF/RNaseH-like_dom"/>
</dbReference>
<dbReference type="InterPro" id="IPR037027">
    <property type="entry name" value="YqgF/RNaseH-like_dom_sf"/>
</dbReference>
<dbReference type="NCBIfam" id="TIGR00250">
    <property type="entry name" value="RNAse_H_YqgF"/>
    <property type="match status" value="1"/>
</dbReference>
<dbReference type="PANTHER" id="PTHR33317">
    <property type="entry name" value="POLYNUCLEOTIDYL TRANSFERASE, RIBONUCLEASE H-LIKE SUPERFAMILY PROTEIN"/>
    <property type="match status" value="1"/>
</dbReference>
<dbReference type="PANTHER" id="PTHR33317:SF4">
    <property type="entry name" value="POLYNUCLEOTIDYL TRANSFERASE, RIBONUCLEASE H-LIKE SUPERFAMILY PROTEIN"/>
    <property type="match status" value="1"/>
</dbReference>
<dbReference type="Pfam" id="PF03652">
    <property type="entry name" value="RuvX"/>
    <property type="match status" value="1"/>
</dbReference>
<dbReference type="SMART" id="SM00732">
    <property type="entry name" value="YqgFc"/>
    <property type="match status" value="1"/>
</dbReference>
<dbReference type="SUPFAM" id="SSF53098">
    <property type="entry name" value="Ribonuclease H-like"/>
    <property type="match status" value="1"/>
</dbReference>
<proteinExistence type="inferred from homology"/>